<evidence type="ECO:0000250" key="1">
    <source>
        <dbReference type="UniProtKB" id="A4IFH6"/>
    </source>
</evidence>
<evidence type="ECO:0000250" key="2">
    <source>
        <dbReference type="UniProtKB" id="P26678"/>
    </source>
</evidence>
<evidence type="ECO:0000250" key="3">
    <source>
        <dbReference type="UniProtKB" id="P61012"/>
    </source>
</evidence>
<evidence type="ECO:0000250" key="4">
    <source>
        <dbReference type="UniProtKB" id="P61014"/>
    </source>
</evidence>
<evidence type="ECO:0000255" key="5"/>
<evidence type="ECO:0000269" key="6">
    <source>
    </source>
</evidence>
<evidence type="ECO:0000303" key="7">
    <source>
    </source>
</evidence>
<evidence type="ECO:0000305" key="8"/>
<evidence type="ECO:0000312" key="9">
    <source>
        <dbReference type="RGD" id="619894"/>
    </source>
</evidence>
<evidence type="ECO:0007744" key="10">
    <source>
    </source>
</evidence>
<sequence>MEKVQYLTRSAIRRASTIEMPQQARQNLQNLFINFCLILICLLLICIIVMLL</sequence>
<accession>P61016</accession>
<accession>P20006</accession>
<comment type="function">
    <text evidence="3 4">Reversibly inhibits the activity of ATP2A2/SERCA2 in cardiac sarcoplasmic reticulum by decreasing the apparent affinity of the ATPase for Ca(2+). Binds preferentially to the ATP-bound E1 conformational form of ATP2A2 which predominates at low Ca(2+) concentrations during the diastolic phase of the cardiac cycle. Inhibits ATP2A2 Ca(2+) affinity by disrupting its allosteric activation by ATP. Modulates the contractility of the heart muscle in response to physiological stimuli via its effects on ATP2A2. Modulates calcium re-uptake during muscle relaxation and plays an important role in calcium homeostasis in the heart muscle. The degree of ATP2A2 inhibition depends on the oligomeric state of PLN. ATP2A2 inhibition is alleviated by PLN phosphorylation. Also inhibits the activity of ATP2A3/SERCA3. Controls intracellular Ca(2+) levels in elongated spermatids and may play a role in germ cell differentiation. In the thalamic reticular nucleus of the brain, plays a role in the regulation of sleep patterns and executive functioning.</text>
</comment>
<comment type="subunit">
    <text evidence="2 4">Homopentamer. Can also form heterooligomers with other sarcoplasmic/endoplasmic reticulum calcium ATPase (SERCA) regulators ARLN, ERLN, SLN and STRIT1/DWORF. Monomer. Interacts with HAX1. Interacts as a monomer with ATP2A2; the interaction decreases ATP2A2 Ca(2+) affinity. Interacts with VMP1; VMP1 competes with PLN and SLN to prevent them from forming an inhibitory complex with ATP2A2. Interacts with S100A1 in a Ca(2+)-dependent manner.</text>
</comment>
<comment type="interaction">
    <interactant intactId="EBI-7620725">
        <id>P61016</id>
    </interactant>
    <interactant intactId="EBI-6096191">
        <id>Q6JP77</id>
        <label>Akap7</label>
    </interactant>
    <organismsDiffer>false</organismsDiffer>
    <experiments>6</experiments>
</comment>
<comment type="subcellular location">
    <subcellularLocation>
        <location evidence="2">Endoplasmic reticulum membrane</location>
        <topology evidence="5">Single-pass membrane protein</topology>
    </subcellularLocation>
    <subcellularLocation>
        <location evidence="2">Sarcoplasmic reticulum membrane</location>
        <topology evidence="5">Single-pass membrane protein</topology>
    </subcellularLocation>
    <subcellularLocation>
        <location evidence="1">Mitochondrion membrane</location>
        <topology evidence="5">Single-pass membrane protein</topology>
    </subcellularLocation>
    <subcellularLocation>
        <location evidence="4">Membrane</location>
        <topology evidence="5">Single-pass membrane protein</topology>
    </subcellularLocation>
    <text evidence="2">Colocalizes with HAX1 at the endoplasmic reticulum. Colocalizes with DMPK at the sarcoplasmic reticulum.</text>
</comment>
<comment type="tissue specificity">
    <text evidence="6">Heart.</text>
</comment>
<comment type="PTM">
    <text evidence="2">Phosphorylation by PKA abolishes the inhibition of ATP2A2-mediated calcium uptake. Phosphorylated at Thr-17 by CaMK2, and in response to beta-adrenergic stimulation. Phosphorylation by DMPK may stimulate sarcoplasmic reticulum calcium uptake in cardiomyocytes (By similarity).</text>
</comment>
<comment type="PTM">
    <text evidence="4">Palmitoylated by ZDHHC16, promoting formation of the homopentamer.</text>
</comment>
<comment type="PTM">
    <text evidence="4">In elongated spermatids, proteolytically cleaved by SPPL2C which modulates intracellular Ca(2+) homeostasis.</text>
</comment>
<comment type="similarity">
    <text evidence="8">Belongs to the phospholamban family.</text>
</comment>
<gene>
    <name evidence="9" type="primary">Pln</name>
</gene>
<keyword id="KW-0007">Acetylation</keyword>
<keyword id="KW-0256">Endoplasmic reticulum</keyword>
<keyword id="KW-0449">Lipoprotein</keyword>
<keyword id="KW-0472">Membrane</keyword>
<keyword id="KW-0496">Mitochondrion</keyword>
<keyword id="KW-0564">Palmitate</keyword>
<keyword id="KW-0597">Phosphoprotein</keyword>
<keyword id="KW-1185">Reference proteome</keyword>
<keyword id="KW-0703">Sarcoplasmic reticulum</keyword>
<keyword id="KW-0812">Transmembrane</keyword>
<keyword id="KW-1133">Transmembrane helix</keyword>
<reference key="1">
    <citation type="journal article" date="1992" name="Biochem. Biophys. Res. Commun.">
        <title>Identification of a highly conserved region at the 5' flank of the phospholamban gene.</title>
        <authorList>
            <person name="Johns D.C."/>
            <person name="Feldman A.M."/>
        </authorList>
    </citation>
    <scope>NUCLEOTIDE SEQUENCE [GENOMIC DNA]</scope>
</reference>
<reference key="2">
    <citation type="journal article" date="1993" name="Circ. Res.">
        <title>Isolation of gene markers of differentiated and proliferating vascular smooth muscle cells.</title>
        <authorList>
            <person name="Shanahan C.M."/>
            <person name="Weissberg P.L."/>
            <person name="Metcalfe J.C."/>
        </authorList>
    </citation>
    <scope>NUCLEOTIDE SEQUENCE [MRNA]</scope>
</reference>
<reference key="3">
    <citation type="journal article" date="1991" name="Adv. Exp. Med. Biol.">
        <title>Cloning phospholamban cDNA from rat aortic smooth muscle.</title>
        <authorList>
            <person name="Hwang K.S."/>
            <person name="Nadal-Ginard B."/>
        </authorList>
    </citation>
    <scope>NUCLEOTIDE SEQUENCE [MRNA]</scope>
    <scope>TISSUE SPECIFICITY</scope>
    <source>
        <tissue>Aortic smooth muscle</tissue>
    </source>
</reference>
<reference key="4">
    <citation type="journal article" date="2012" name="Nat. Commun.">
        <title>Quantitative maps of protein phosphorylation sites across 14 different rat organs and tissues.</title>
        <authorList>
            <person name="Lundby A."/>
            <person name="Secher A."/>
            <person name="Lage K."/>
            <person name="Nordsborg N.B."/>
            <person name="Dmytriyev A."/>
            <person name="Lundby C."/>
            <person name="Olsen J.V."/>
        </authorList>
    </citation>
    <scope>PHOSPHORYLATION [LARGE SCALE ANALYSIS] AT SER-16 AND THR-17</scope>
    <scope>IDENTIFICATION BY MASS SPECTROMETRY [LARGE SCALE ANALYSIS]</scope>
</reference>
<protein>
    <recommendedName>
        <fullName evidence="7 9">Phospholamban</fullName>
        <shortName>PLB</shortName>
    </recommendedName>
</protein>
<feature type="chain" id="PRO_0000191248" description="Phospholamban">
    <location>
        <begin position="1"/>
        <end position="52"/>
    </location>
</feature>
<feature type="topological domain" description="Cytoplasmic" evidence="5">
    <location>
        <begin position="1"/>
        <end position="31"/>
    </location>
</feature>
<feature type="transmembrane region" description="Helical" evidence="5">
    <location>
        <begin position="32"/>
        <end position="52"/>
    </location>
</feature>
<feature type="modified residue" description="N-acetylmethionine" evidence="1">
    <location>
        <position position="1"/>
    </location>
</feature>
<feature type="modified residue" description="Phosphoserine" evidence="10">
    <location>
        <position position="16"/>
    </location>
</feature>
<feature type="modified residue" description="Phosphothreonine" evidence="10">
    <location>
        <position position="17"/>
    </location>
</feature>
<feature type="lipid moiety-binding region" description="S-palmitoyl cysteine" evidence="4">
    <location>
        <position position="36"/>
    </location>
</feature>
<dbReference type="EMBL" id="L03382">
    <property type="protein sequence ID" value="AAA41849.1"/>
    <property type="molecule type" value="Genomic_DNA"/>
</dbReference>
<dbReference type="EMBL" id="X71068">
    <property type="protein sequence ID" value="CAA50394.1"/>
    <property type="molecule type" value="mRNA"/>
</dbReference>
<dbReference type="EMBL" id="S95849">
    <property type="protein sequence ID" value="AAN86727.1"/>
    <property type="molecule type" value="mRNA"/>
</dbReference>
<dbReference type="EMBL" id="S95853">
    <property type="protein sequence ID" value="AAB21903.1"/>
    <property type="molecule type" value="mRNA"/>
</dbReference>
<dbReference type="PIR" id="S37638">
    <property type="entry name" value="S37638"/>
</dbReference>
<dbReference type="RefSeq" id="NP_073198.1">
    <property type="nucleotide sequence ID" value="NM_022707.2"/>
</dbReference>
<dbReference type="RefSeq" id="XP_038954981.1">
    <property type="nucleotide sequence ID" value="XM_039099053.2"/>
</dbReference>
<dbReference type="BMRB" id="P61016"/>
<dbReference type="SMR" id="P61016"/>
<dbReference type="BioGRID" id="249188">
    <property type="interactions" value="2"/>
</dbReference>
<dbReference type="FunCoup" id="P61016">
    <property type="interactions" value="44"/>
</dbReference>
<dbReference type="IntAct" id="P61016">
    <property type="interactions" value="1"/>
</dbReference>
<dbReference type="MINT" id="P61016"/>
<dbReference type="STRING" id="10116.ENSRNOP00000000469"/>
<dbReference type="GlyGen" id="P61016">
    <property type="glycosylation" value="1 site, 1 O-linked glycan (1 site)"/>
</dbReference>
<dbReference type="iPTMnet" id="P61016"/>
<dbReference type="PhosphoSitePlus" id="P61016"/>
<dbReference type="PaxDb" id="10116-ENSRNOP00000000469"/>
<dbReference type="GeneID" id="64672"/>
<dbReference type="KEGG" id="rno:64672"/>
<dbReference type="UCSC" id="RGD:619894">
    <property type="organism name" value="rat"/>
</dbReference>
<dbReference type="AGR" id="RGD:619894"/>
<dbReference type="CTD" id="5350"/>
<dbReference type="RGD" id="619894">
    <property type="gene designation" value="Pln"/>
</dbReference>
<dbReference type="eggNOG" id="ENOG502S97F">
    <property type="taxonomic scope" value="Eukaryota"/>
</dbReference>
<dbReference type="HOGENOM" id="CLU_214576_0_0_1"/>
<dbReference type="InParanoid" id="P61016"/>
<dbReference type="TreeFam" id="TF330750"/>
<dbReference type="Reactome" id="R-RNO-5578775">
    <property type="pathway name" value="Ion homeostasis"/>
</dbReference>
<dbReference type="Reactome" id="R-RNO-936837">
    <property type="pathway name" value="Ion transport by P-type ATPases"/>
</dbReference>
<dbReference type="PRO" id="PR:P61016"/>
<dbReference type="Proteomes" id="UP000002494">
    <property type="component" value="Chromosome 20"/>
</dbReference>
<dbReference type="Bgee" id="ENSRNOG00000000413">
    <property type="expression patterns" value="Expressed in heart and 19 other cell types or tissues"/>
</dbReference>
<dbReference type="GO" id="GO:0090534">
    <property type="term" value="C:calcium ion-transporting ATPase complex"/>
    <property type="evidence" value="ECO:0000266"/>
    <property type="project" value="RGD"/>
</dbReference>
<dbReference type="GO" id="GO:0005789">
    <property type="term" value="C:endoplasmic reticulum membrane"/>
    <property type="evidence" value="ECO:0000250"/>
    <property type="project" value="UniProtKB"/>
</dbReference>
<dbReference type="GO" id="GO:0016020">
    <property type="term" value="C:membrane"/>
    <property type="evidence" value="ECO:0000266"/>
    <property type="project" value="RGD"/>
</dbReference>
<dbReference type="GO" id="GO:0031966">
    <property type="term" value="C:mitochondrial membrane"/>
    <property type="evidence" value="ECO:0007669"/>
    <property type="project" value="UniProtKB-SubCell"/>
</dbReference>
<dbReference type="GO" id="GO:1990629">
    <property type="term" value="C:phospholamban complex"/>
    <property type="evidence" value="ECO:0000266"/>
    <property type="project" value="RGD"/>
</dbReference>
<dbReference type="GO" id="GO:0032991">
    <property type="term" value="C:protein-containing complex"/>
    <property type="evidence" value="ECO:0000314"/>
    <property type="project" value="RGD"/>
</dbReference>
<dbReference type="GO" id="GO:0016529">
    <property type="term" value="C:sarcoplasmic reticulum"/>
    <property type="evidence" value="ECO:0000314"/>
    <property type="project" value="RGD"/>
</dbReference>
<dbReference type="GO" id="GO:0033017">
    <property type="term" value="C:sarcoplasmic reticulum membrane"/>
    <property type="evidence" value="ECO:0000250"/>
    <property type="project" value="UniProtKB"/>
</dbReference>
<dbReference type="GO" id="GO:0031982">
    <property type="term" value="C:vesicle"/>
    <property type="evidence" value="ECO:0000314"/>
    <property type="project" value="RGD"/>
</dbReference>
<dbReference type="GO" id="GO:0042030">
    <property type="term" value="F:ATPase inhibitor activity"/>
    <property type="evidence" value="ECO:0000314"/>
    <property type="project" value="RGD"/>
</dbReference>
<dbReference type="GO" id="GO:0042802">
    <property type="term" value="F:identical protein binding"/>
    <property type="evidence" value="ECO:0000353"/>
    <property type="project" value="RGD"/>
</dbReference>
<dbReference type="GO" id="GO:0042803">
    <property type="term" value="F:protein homodimerization activity"/>
    <property type="evidence" value="ECO:0000250"/>
    <property type="project" value="UniProtKB"/>
</dbReference>
<dbReference type="GO" id="GO:0001675">
    <property type="term" value="P:acrosome assembly"/>
    <property type="evidence" value="ECO:0000250"/>
    <property type="project" value="UniProtKB"/>
</dbReference>
<dbReference type="GO" id="GO:0086023">
    <property type="term" value="P:adenylate cyclase-activating adrenergic receptor signaling pathway involved in heart process"/>
    <property type="evidence" value="ECO:0000266"/>
    <property type="project" value="RGD"/>
</dbReference>
<dbReference type="GO" id="GO:0006816">
    <property type="term" value="P:calcium ion transport"/>
    <property type="evidence" value="ECO:0000315"/>
    <property type="project" value="RGD"/>
</dbReference>
<dbReference type="GO" id="GO:0048738">
    <property type="term" value="P:cardiac muscle tissue development"/>
    <property type="evidence" value="ECO:0000266"/>
    <property type="project" value="RGD"/>
</dbReference>
<dbReference type="GO" id="GO:0050802">
    <property type="term" value="P:circadian sleep/wake cycle, sleep"/>
    <property type="evidence" value="ECO:0000250"/>
    <property type="project" value="UniProtKB"/>
</dbReference>
<dbReference type="GO" id="GO:0006874">
    <property type="term" value="P:intracellular calcium ion homeostasis"/>
    <property type="evidence" value="ECO:0000250"/>
    <property type="project" value="UniProtKB"/>
</dbReference>
<dbReference type="GO" id="GO:0045475">
    <property type="term" value="P:locomotor rhythm"/>
    <property type="evidence" value="ECO:0000250"/>
    <property type="project" value="UniProtKB"/>
</dbReference>
<dbReference type="GO" id="GO:0046716">
    <property type="term" value="P:muscle cell cellular homeostasis"/>
    <property type="evidence" value="ECO:0000266"/>
    <property type="project" value="RGD"/>
</dbReference>
<dbReference type="GO" id="GO:1901895">
    <property type="term" value="P:negative regulation of ATPase-coupled calcium transmembrane transporter activity"/>
    <property type="evidence" value="ECO:0000250"/>
    <property type="project" value="UniProtKB"/>
</dbReference>
<dbReference type="GO" id="GO:1902081">
    <property type="term" value="P:negative regulation of calcium ion import into sarcoplasmic reticulum"/>
    <property type="evidence" value="ECO:0000250"/>
    <property type="project" value="UniProtKB"/>
</dbReference>
<dbReference type="GO" id="GO:0051926">
    <property type="term" value="P:negative regulation of calcium ion transport"/>
    <property type="evidence" value="ECO:0000266"/>
    <property type="project" value="RGD"/>
</dbReference>
<dbReference type="GO" id="GO:0045822">
    <property type="term" value="P:negative regulation of heart contraction"/>
    <property type="evidence" value="ECO:0000266"/>
    <property type="project" value="RGD"/>
</dbReference>
<dbReference type="GO" id="GO:0010459">
    <property type="term" value="P:negative regulation of heart rate"/>
    <property type="evidence" value="ECO:0000266"/>
    <property type="project" value="RGD"/>
</dbReference>
<dbReference type="GO" id="GO:0007219">
    <property type="term" value="P:Notch signaling pathway"/>
    <property type="evidence" value="ECO:0000266"/>
    <property type="project" value="RGD"/>
</dbReference>
<dbReference type="GO" id="GO:0090279">
    <property type="term" value="P:regulation of calcium ion import"/>
    <property type="evidence" value="ECO:0000266"/>
    <property type="project" value="RGD"/>
</dbReference>
<dbReference type="GO" id="GO:0051924">
    <property type="term" value="P:regulation of calcium ion transport"/>
    <property type="evidence" value="ECO:0000250"/>
    <property type="project" value="UniProtKB"/>
</dbReference>
<dbReference type="GO" id="GO:0086004">
    <property type="term" value="P:regulation of cardiac muscle cell contraction"/>
    <property type="evidence" value="ECO:0000266"/>
    <property type="project" value="RGD"/>
</dbReference>
<dbReference type="GO" id="GO:0010881">
    <property type="term" value="P:regulation of cardiac muscle contraction by regulation of the release of sequestered calcium ion"/>
    <property type="evidence" value="ECO:0000266"/>
    <property type="project" value="RGD"/>
</dbReference>
<dbReference type="GO" id="GO:0008016">
    <property type="term" value="P:regulation of heart contraction"/>
    <property type="evidence" value="ECO:0000266"/>
    <property type="project" value="RGD"/>
</dbReference>
<dbReference type="GO" id="GO:1901077">
    <property type="term" value="P:regulation of relaxation of muscle"/>
    <property type="evidence" value="ECO:0000266"/>
    <property type="project" value="RGD"/>
</dbReference>
<dbReference type="GO" id="GO:0010880">
    <property type="term" value="P:regulation of release of sequestered calcium ion into cytosol by sarcoplasmic reticulum"/>
    <property type="evidence" value="ECO:0000266"/>
    <property type="project" value="RGD"/>
</dbReference>
<dbReference type="GO" id="GO:0002026">
    <property type="term" value="P:regulation of the force of heart contraction"/>
    <property type="evidence" value="ECO:0000266"/>
    <property type="project" value="RGD"/>
</dbReference>
<dbReference type="GO" id="GO:0086092">
    <property type="term" value="P:regulation of the force of heart contraction by cardiac conduction"/>
    <property type="evidence" value="ECO:0000266"/>
    <property type="project" value="RGD"/>
</dbReference>
<dbReference type="GO" id="GO:0032868">
    <property type="term" value="P:response to insulin"/>
    <property type="evidence" value="ECO:0000270"/>
    <property type="project" value="RGD"/>
</dbReference>
<dbReference type="GO" id="GO:0033574">
    <property type="term" value="P:response to testosterone"/>
    <property type="evidence" value="ECO:0000314"/>
    <property type="project" value="RGD"/>
</dbReference>
<dbReference type="GO" id="GO:0010043">
    <property type="term" value="P:response to zinc ion"/>
    <property type="evidence" value="ECO:0000314"/>
    <property type="project" value="RGD"/>
</dbReference>
<dbReference type="GO" id="GO:0007283">
    <property type="term" value="P:spermatogenesis"/>
    <property type="evidence" value="ECO:0000266"/>
    <property type="project" value="RGD"/>
</dbReference>
<dbReference type="GO" id="GO:0008542">
    <property type="term" value="P:visual learning"/>
    <property type="evidence" value="ECO:0000250"/>
    <property type="project" value="UniProtKB"/>
</dbReference>
<dbReference type="CDD" id="cd20250">
    <property type="entry name" value="Phospholamban"/>
    <property type="match status" value="1"/>
</dbReference>
<dbReference type="FunFam" id="1.20.5.290:FF:000001">
    <property type="entry name" value="Cardiac phospholamban"/>
    <property type="match status" value="1"/>
</dbReference>
<dbReference type="Gene3D" id="1.20.5.290">
    <property type="entry name" value="Phospholamban"/>
    <property type="match status" value="1"/>
</dbReference>
<dbReference type="InterPro" id="IPR005984">
    <property type="entry name" value="PLB"/>
</dbReference>
<dbReference type="NCBIfam" id="TIGR01294">
    <property type="entry name" value="P_lamban"/>
    <property type="match status" value="1"/>
</dbReference>
<dbReference type="PANTHER" id="PTHR21194">
    <property type="entry name" value="CARDIAC PHOSPHOLAMBAN"/>
    <property type="match status" value="1"/>
</dbReference>
<dbReference type="PANTHER" id="PTHR21194:SF1">
    <property type="entry name" value="CARDIAC PHOSPHOLAMBAN"/>
    <property type="match status" value="1"/>
</dbReference>
<dbReference type="Pfam" id="PF04272">
    <property type="entry name" value="Phospholamban"/>
    <property type="match status" value="1"/>
</dbReference>
<dbReference type="PIRSF" id="PIRSF001665">
    <property type="entry name" value="PLB"/>
    <property type="match status" value="1"/>
</dbReference>
<name>PPLA_RAT</name>
<organism>
    <name type="scientific">Rattus norvegicus</name>
    <name type="common">Rat</name>
    <dbReference type="NCBI Taxonomy" id="10116"/>
    <lineage>
        <taxon>Eukaryota</taxon>
        <taxon>Metazoa</taxon>
        <taxon>Chordata</taxon>
        <taxon>Craniata</taxon>
        <taxon>Vertebrata</taxon>
        <taxon>Euteleostomi</taxon>
        <taxon>Mammalia</taxon>
        <taxon>Eutheria</taxon>
        <taxon>Euarchontoglires</taxon>
        <taxon>Glires</taxon>
        <taxon>Rodentia</taxon>
        <taxon>Myomorpha</taxon>
        <taxon>Muroidea</taxon>
        <taxon>Muridae</taxon>
        <taxon>Murinae</taxon>
        <taxon>Rattus</taxon>
    </lineage>
</organism>
<proteinExistence type="evidence at protein level"/>